<evidence type="ECO:0000255" key="1">
    <source>
        <dbReference type="HAMAP-Rule" id="MF_01215"/>
    </source>
</evidence>
<dbReference type="EC" id="4.1.1.23" evidence="1"/>
<dbReference type="EMBL" id="CR936257">
    <property type="protein sequence ID" value="CAI48958.1"/>
    <property type="molecule type" value="Genomic_DNA"/>
</dbReference>
<dbReference type="RefSeq" id="WP_011322591.1">
    <property type="nucleotide sequence ID" value="NC_007426.1"/>
</dbReference>
<dbReference type="SMR" id="Q3ISC9"/>
<dbReference type="STRING" id="348780.NP_1734A"/>
<dbReference type="EnsemblBacteria" id="CAI48958">
    <property type="protein sequence ID" value="CAI48958"/>
    <property type="gene ID" value="NP_1734A"/>
</dbReference>
<dbReference type="GeneID" id="3703085"/>
<dbReference type="KEGG" id="nph:NP_1734A"/>
<dbReference type="eggNOG" id="arCOG00081">
    <property type="taxonomic scope" value="Archaea"/>
</dbReference>
<dbReference type="HOGENOM" id="CLU_060704_1_0_2"/>
<dbReference type="OrthoDB" id="94124at2157"/>
<dbReference type="UniPathway" id="UPA00070">
    <property type="reaction ID" value="UER00120"/>
</dbReference>
<dbReference type="Proteomes" id="UP000002698">
    <property type="component" value="Chromosome"/>
</dbReference>
<dbReference type="GO" id="GO:0004590">
    <property type="term" value="F:orotidine-5'-phosphate decarboxylase activity"/>
    <property type="evidence" value="ECO:0007669"/>
    <property type="project" value="UniProtKB-UniRule"/>
</dbReference>
<dbReference type="GO" id="GO:0006207">
    <property type="term" value="P:'de novo' pyrimidine nucleobase biosynthetic process"/>
    <property type="evidence" value="ECO:0007669"/>
    <property type="project" value="InterPro"/>
</dbReference>
<dbReference type="GO" id="GO:0044205">
    <property type="term" value="P:'de novo' UMP biosynthetic process"/>
    <property type="evidence" value="ECO:0007669"/>
    <property type="project" value="UniProtKB-UniRule"/>
</dbReference>
<dbReference type="CDD" id="cd04725">
    <property type="entry name" value="OMP_decarboxylase_like"/>
    <property type="match status" value="1"/>
</dbReference>
<dbReference type="Gene3D" id="3.20.20.70">
    <property type="entry name" value="Aldolase class I"/>
    <property type="match status" value="1"/>
</dbReference>
<dbReference type="HAMAP" id="MF_01215">
    <property type="entry name" value="OMPdecase_type2"/>
    <property type="match status" value="1"/>
</dbReference>
<dbReference type="InterPro" id="IPR013785">
    <property type="entry name" value="Aldolase_TIM"/>
</dbReference>
<dbReference type="InterPro" id="IPR018089">
    <property type="entry name" value="OMPdecase_AS"/>
</dbReference>
<dbReference type="InterPro" id="IPR011995">
    <property type="entry name" value="OMPdecase_type-2"/>
</dbReference>
<dbReference type="InterPro" id="IPR001754">
    <property type="entry name" value="OMPdeCOase_dom"/>
</dbReference>
<dbReference type="InterPro" id="IPR011060">
    <property type="entry name" value="RibuloseP-bd_barrel"/>
</dbReference>
<dbReference type="NCBIfam" id="TIGR02127">
    <property type="entry name" value="pyrF_sub2"/>
    <property type="match status" value="1"/>
</dbReference>
<dbReference type="PANTHER" id="PTHR43375">
    <property type="entry name" value="OROTIDINE 5'-PHOSPHATE DECARBOXYLASE"/>
    <property type="match status" value="1"/>
</dbReference>
<dbReference type="PANTHER" id="PTHR43375:SF1">
    <property type="entry name" value="OROTIDINE 5'-PHOSPHATE DECARBOXYLASE"/>
    <property type="match status" value="1"/>
</dbReference>
<dbReference type="Pfam" id="PF00215">
    <property type="entry name" value="OMPdecase"/>
    <property type="match status" value="1"/>
</dbReference>
<dbReference type="SMART" id="SM00934">
    <property type="entry name" value="OMPdecase"/>
    <property type="match status" value="1"/>
</dbReference>
<dbReference type="SUPFAM" id="SSF51366">
    <property type="entry name" value="Ribulose-phoshate binding barrel"/>
    <property type="match status" value="1"/>
</dbReference>
<dbReference type="PROSITE" id="PS00156">
    <property type="entry name" value="OMPDECASE"/>
    <property type="match status" value="1"/>
</dbReference>
<keyword id="KW-0210">Decarboxylase</keyword>
<keyword id="KW-0456">Lyase</keyword>
<keyword id="KW-0665">Pyrimidine biosynthesis</keyword>
<keyword id="KW-1185">Reference proteome</keyword>
<accession>Q3ISC9</accession>
<organism>
    <name type="scientific">Natronomonas pharaonis (strain ATCC 35678 / DSM 2160 / CIP 103997 / JCM 8858 / NBRC 14720 / NCIMB 2260 / Gabara)</name>
    <name type="common">Halobacterium pharaonis</name>
    <dbReference type="NCBI Taxonomy" id="348780"/>
    <lineage>
        <taxon>Archaea</taxon>
        <taxon>Methanobacteriati</taxon>
        <taxon>Methanobacteriota</taxon>
        <taxon>Stenosarchaea group</taxon>
        <taxon>Halobacteria</taxon>
        <taxon>Halobacteriales</taxon>
        <taxon>Haloarculaceae</taxon>
        <taxon>Natronomonas</taxon>
    </lineage>
</organism>
<reference key="1">
    <citation type="journal article" date="2005" name="Genome Res.">
        <title>Living with two extremes: conclusions from the genome sequence of Natronomonas pharaonis.</title>
        <authorList>
            <person name="Falb M."/>
            <person name="Pfeiffer F."/>
            <person name="Palm P."/>
            <person name="Rodewald K."/>
            <person name="Hickmann V."/>
            <person name="Tittor J."/>
            <person name="Oesterhelt D."/>
        </authorList>
    </citation>
    <scope>NUCLEOTIDE SEQUENCE [LARGE SCALE GENOMIC DNA]</scope>
    <source>
        <strain>ATCC 35678 / DSM 2160 / CIP 103997 / JCM 8858 / NBRC 14720 / NCIMB 2260 / Gabara</strain>
    </source>
</reference>
<name>PYRF_NATPD</name>
<comment type="catalytic activity">
    <reaction evidence="1">
        <text>orotidine 5'-phosphate + H(+) = UMP + CO2</text>
        <dbReference type="Rhea" id="RHEA:11596"/>
        <dbReference type="ChEBI" id="CHEBI:15378"/>
        <dbReference type="ChEBI" id="CHEBI:16526"/>
        <dbReference type="ChEBI" id="CHEBI:57538"/>
        <dbReference type="ChEBI" id="CHEBI:57865"/>
        <dbReference type="EC" id="4.1.1.23"/>
    </reaction>
</comment>
<comment type="pathway">
    <text evidence="1">Pyrimidine metabolism; UMP biosynthesis via de novo pathway; UMP from orotate: step 2/2.</text>
</comment>
<comment type="similarity">
    <text evidence="1">Belongs to the OMP decarboxylase family. Type 2 subfamily.</text>
</comment>
<sequence length="269" mass="29255">MSFFETLADRIDDRDSVVSVGLDPDPDRLPEFLDADLPRWAFNRRVIDATHEHAACYKPNAAFYEDSDGWRALEETIAYAHGKGVPVLLDAKRGDIGNTARQYATLLDDDGLGADAITANPYMGRDTLEPYLSRADKGVFILCRTSNSGGADFQNLTVGNDKRLYEYVAQRCQEWNEHENVGLVVGATAPEELESVRDLVDLPFLVPGVGAQGGDAAAAVDHGLADGVGLVNSSRGIIFAGEGAADEDEYFRAVGAAAKRLKQRLNKHR</sequence>
<proteinExistence type="inferred from homology"/>
<gene>
    <name evidence="1" type="primary">pyrF</name>
    <name type="ordered locus">NP_1734A</name>
</gene>
<protein>
    <recommendedName>
        <fullName evidence="1">Orotidine 5'-phosphate decarboxylase</fullName>
        <ecNumber evidence="1">4.1.1.23</ecNumber>
    </recommendedName>
    <alternativeName>
        <fullName evidence="1">OMP decarboxylase</fullName>
        <shortName evidence="1">OMPDCase</shortName>
        <shortName evidence="1">OMPdecase</shortName>
    </alternativeName>
</protein>
<feature type="chain" id="PRO_1000066482" description="Orotidine 5'-phosphate decarboxylase">
    <location>
        <begin position="1"/>
        <end position="269"/>
    </location>
</feature>
<feature type="active site" description="Proton donor" evidence="1">
    <location>
        <position position="92"/>
    </location>
</feature>